<evidence type="ECO:0000269" key="1">
    <source>
    </source>
</evidence>
<evidence type="ECO:0000269" key="2">
    <source>
    </source>
</evidence>
<evidence type="ECO:0000269" key="3">
    <source>
    </source>
</evidence>
<evidence type="ECO:0000269" key="4">
    <source>
    </source>
</evidence>
<evidence type="ECO:0000269" key="5">
    <source ref="6"/>
</evidence>
<evidence type="ECO:0000303" key="6">
    <source>
    </source>
</evidence>
<evidence type="ECO:0000303" key="7">
    <source>
    </source>
</evidence>
<evidence type="ECO:0000305" key="8"/>
<evidence type="ECO:0000312" key="9">
    <source>
        <dbReference type="EMBL" id="EAL45163.1"/>
    </source>
</evidence>
<evidence type="ECO:0007744" key="10">
    <source>
        <dbReference type="PDB" id="4PEF"/>
    </source>
</evidence>
<evidence type="ECO:0007744" key="11">
    <source>
        <dbReference type="PDB" id="4PEG"/>
    </source>
</evidence>
<evidence type="ECO:0007744" key="12">
    <source>
        <dbReference type="PDB" id="4PEH"/>
    </source>
</evidence>
<evidence type="ECO:0007744" key="13">
    <source>
        <dbReference type="PDB" id="4PEI"/>
    </source>
</evidence>
<evidence type="ECO:0007744" key="14">
    <source>
        <dbReference type="PDB" id="5K71"/>
    </source>
</evidence>
<evidence type="ECO:0007744" key="15">
    <source>
        <dbReference type="PDB" id="5K73"/>
    </source>
</evidence>
<evidence type="ECO:0007744" key="16">
    <source>
        <dbReference type="PDB" id="5K77"/>
    </source>
</evidence>
<evidence type="ECO:0007744" key="17">
    <source>
        <dbReference type="PDB" id="5K78"/>
    </source>
</evidence>
<evidence type="ECO:0007744" key="18">
    <source>
        <dbReference type="PDB" id="5UKI"/>
    </source>
</evidence>
<evidence type="ECO:0007744" key="19">
    <source>
        <dbReference type="PDB" id="8DZK"/>
    </source>
</evidence>
<evidence type="ECO:0007829" key="20">
    <source>
        <dbReference type="PDB" id="4PEI"/>
    </source>
</evidence>
<evidence type="ECO:0007829" key="21">
    <source>
        <dbReference type="PDB" id="5UKI"/>
    </source>
</evidence>
<name>DBR1_ENTH1</name>
<accession>C4M1P9</accession>
<comment type="function">
    <text evidence="1 2 3">Cleaves the 2'-5' phosphodiester linkage at the branch point of excised lariat intron RNA and converts them into linear molecules that can be subsequently degraded, thereby facilitating ribonucleotide turnover.</text>
</comment>
<comment type="cofactor">
    <cofactor evidence="2">
        <name>Fe(2+)</name>
        <dbReference type="ChEBI" id="CHEBI:29033"/>
    </cofactor>
    <cofactor evidence="2 3">
        <name>Zn(2+)</name>
        <dbReference type="ChEBI" id="CHEBI:29105"/>
    </cofactor>
    <cofactor evidence="1 3">
        <name>Mn(2+)</name>
        <dbReference type="ChEBI" id="CHEBI:29035"/>
    </cofactor>
    <text evidence="2 3">Binds 2 divalent metal cations per subunit.</text>
</comment>
<comment type="activity regulation">
    <text evidence="1 2 3">Active in presence of diverse metals including Fe(2+), Zn(2+) and Mn(2+) (PubMed:25123664, PubMed:27930312, PubMed:28504306). Binds two metal cations in two adjacent alpha and beta metal-binding pockets (PubMed:25123664, PubMed:27930312, PubMed:28504306). The activity is the highest with Fe(2+) bound to the 2 metal-binding sites (PubMed:27930312). The activity is slightly lower with Fe(2+) bound to the beta site and Zn(2+) to the alpha site and decreases further when only Zn(2+) is bound (PubMed:27930312). No activity with Mn(2+) (PubMed:27930312). However, another study showed activity with Mn(2+) bound to the beta site and Zn(2+) to the alpha site (PubMed:28504306). Mn(2+) appears unable to bind to the alpha site (PubMed:25123664).</text>
</comment>
<comment type="biophysicochemical properties">
    <kinetics>
        <KM evidence="2">0.2 uM for 10-mer branched RNA AK88 (when bound to Fe(2+) and Zn(2+))</KM>
        <text evidence="2">kcat is 2 sec(-1) with 0-mer branched RNA AK88 as substrate (when bound to Fe(2+) and Zn(2+)).</text>
    </kinetics>
</comment>
<comment type="subcellular location">
    <subcellularLocation>
        <location evidence="4">Cytoplasm</location>
        <location evidence="4">Perinuclear region</location>
    </subcellularLocation>
    <text evidence="4">In trophozoites, appears to localize to the cytoplasmic side of the nucleus concentrating on the basal region.</text>
</comment>
<comment type="developmental stage">
    <text evidence="4">Expressed in trophozoites (at protein level).</text>
</comment>
<comment type="similarity">
    <text evidence="8">Belongs to the lariat debranching enzyme family.</text>
</comment>
<dbReference type="EC" id="3.1.4.-" evidence="1 2 3"/>
<dbReference type="EMBL" id="DS571213">
    <property type="protein sequence ID" value="EAL45163.1"/>
    <property type="molecule type" value="Genomic_DNA"/>
</dbReference>
<dbReference type="RefSeq" id="XP_650549.1">
    <property type="nucleotide sequence ID" value="XM_645457.1"/>
</dbReference>
<dbReference type="PDB" id="4PEF">
    <property type="method" value="X-ray"/>
    <property type="resolution" value="1.96 A"/>
    <property type="chains" value="A/B/C/D/E=1-354"/>
</dbReference>
<dbReference type="PDB" id="4PEG">
    <property type="method" value="X-ray"/>
    <property type="resolution" value="2.00 A"/>
    <property type="chains" value="A/B/C/D/E=1-354"/>
</dbReference>
<dbReference type="PDB" id="4PEH">
    <property type="method" value="X-ray"/>
    <property type="resolution" value="2.10 A"/>
    <property type="chains" value="A/B/C/D/E=1-354"/>
</dbReference>
<dbReference type="PDB" id="4PEI">
    <property type="method" value="X-ray"/>
    <property type="resolution" value="1.95 A"/>
    <property type="chains" value="A/B/C/D/E=1-354"/>
</dbReference>
<dbReference type="PDB" id="5K71">
    <property type="method" value="X-ray"/>
    <property type="resolution" value="2.57 A"/>
    <property type="chains" value="A/B/C/D/E=1-354"/>
</dbReference>
<dbReference type="PDB" id="5K73">
    <property type="method" value="X-ray"/>
    <property type="resolution" value="2.08 A"/>
    <property type="chains" value="A/B/C/D/E=1-354"/>
</dbReference>
<dbReference type="PDB" id="5K77">
    <property type="method" value="X-ray"/>
    <property type="resolution" value="2.17 A"/>
    <property type="chains" value="A/B/C/D/E=1-354"/>
</dbReference>
<dbReference type="PDB" id="5K78">
    <property type="method" value="X-ray"/>
    <property type="resolution" value="2.64 A"/>
    <property type="chains" value="A/B/C/D/E=1-354"/>
</dbReference>
<dbReference type="PDB" id="5UKI">
    <property type="method" value="X-ray"/>
    <property type="resolution" value="1.80 A"/>
    <property type="chains" value="A=7-354"/>
</dbReference>
<dbReference type="PDB" id="8DZK">
    <property type="method" value="X-ray"/>
    <property type="resolution" value="2.10 A"/>
    <property type="chains" value="A/B/C/D/E=1-354"/>
</dbReference>
<dbReference type="PDBsum" id="4PEF"/>
<dbReference type="PDBsum" id="4PEG"/>
<dbReference type="PDBsum" id="4PEH"/>
<dbReference type="PDBsum" id="4PEI"/>
<dbReference type="PDBsum" id="5K71"/>
<dbReference type="PDBsum" id="5K73"/>
<dbReference type="PDBsum" id="5K77"/>
<dbReference type="PDBsum" id="5K78"/>
<dbReference type="PDBsum" id="5UKI"/>
<dbReference type="PDBsum" id="8DZK"/>
<dbReference type="SMR" id="C4M1P9"/>
<dbReference type="STRING" id="5759.C4M1P9"/>
<dbReference type="DNASU" id="3404858"/>
<dbReference type="EnsemblProtists" id="rna_EHI_062730-1">
    <property type="protein sequence ID" value="rna_EHI_062730-1"/>
    <property type="gene ID" value="EHI_062730"/>
</dbReference>
<dbReference type="GeneID" id="3404858"/>
<dbReference type="KEGG" id="ehi:EHI_062730"/>
<dbReference type="VEuPathDB" id="AmoebaDB:EHI5A_060730"/>
<dbReference type="VEuPathDB" id="AmoebaDB:EHI7A_037930"/>
<dbReference type="VEuPathDB" id="AmoebaDB:EHI8A_036710"/>
<dbReference type="VEuPathDB" id="AmoebaDB:EHI_062730"/>
<dbReference type="VEuPathDB" id="AmoebaDB:KM1_036120"/>
<dbReference type="HOGENOM" id="CLU_005893_2_1_1"/>
<dbReference type="InParanoid" id="C4M1P9"/>
<dbReference type="OMA" id="TDYGDWK"/>
<dbReference type="OrthoDB" id="407609at2759"/>
<dbReference type="SABIO-RK" id="C4M1P9"/>
<dbReference type="STRENDA-DB" id="DVE8AT">
    <property type="experiment" value="kinetics of Dbr1 with a synthetic branched RNA"/>
</dbReference>
<dbReference type="EvolutionaryTrace" id="C4M1P9"/>
<dbReference type="Proteomes" id="UP000001926">
    <property type="component" value="Partially assembled WGS sequence"/>
</dbReference>
<dbReference type="GO" id="GO:0005634">
    <property type="term" value="C:nucleus"/>
    <property type="evidence" value="ECO:0000318"/>
    <property type="project" value="GO_Central"/>
</dbReference>
<dbReference type="GO" id="GO:0048471">
    <property type="term" value="C:perinuclear region of cytoplasm"/>
    <property type="evidence" value="ECO:0000314"/>
    <property type="project" value="UniProtKB"/>
</dbReference>
<dbReference type="GO" id="GO:0005506">
    <property type="term" value="F:iron ion binding"/>
    <property type="evidence" value="ECO:0000314"/>
    <property type="project" value="UniProtKB"/>
</dbReference>
<dbReference type="GO" id="GO:0030145">
    <property type="term" value="F:manganese ion binding"/>
    <property type="evidence" value="ECO:0000314"/>
    <property type="project" value="UniProtKB"/>
</dbReference>
<dbReference type="GO" id="GO:0003723">
    <property type="term" value="F:RNA binding"/>
    <property type="evidence" value="ECO:0000314"/>
    <property type="project" value="UniProtKB"/>
</dbReference>
<dbReference type="GO" id="GO:0008419">
    <property type="term" value="F:RNA lariat debranching enzyme activity"/>
    <property type="evidence" value="ECO:0000314"/>
    <property type="project" value="UniProtKB"/>
</dbReference>
<dbReference type="GO" id="GO:0008270">
    <property type="term" value="F:zinc ion binding"/>
    <property type="evidence" value="ECO:0000314"/>
    <property type="project" value="UniProtKB"/>
</dbReference>
<dbReference type="GO" id="GO:0000398">
    <property type="term" value="P:mRNA splicing, via spliceosome"/>
    <property type="evidence" value="ECO:0000318"/>
    <property type="project" value="GO_Central"/>
</dbReference>
<dbReference type="GO" id="GO:0000375">
    <property type="term" value="P:RNA splicing, via transesterification reactions"/>
    <property type="evidence" value="ECO:0000314"/>
    <property type="project" value="UniProtKB"/>
</dbReference>
<dbReference type="CDD" id="cd00844">
    <property type="entry name" value="MPP_Dbr1_N"/>
    <property type="match status" value="1"/>
</dbReference>
<dbReference type="Gene3D" id="3.60.21.10">
    <property type="match status" value="1"/>
</dbReference>
<dbReference type="InterPro" id="IPR004843">
    <property type="entry name" value="Calcineurin-like_PHP_ApaH"/>
</dbReference>
<dbReference type="InterPro" id="IPR049499">
    <property type="entry name" value="Dbr1_CTD"/>
</dbReference>
<dbReference type="InterPro" id="IPR041816">
    <property type="entry name" value="Dbr1_N"/>
</dbReference>
<dbReference type="InterPro" id="IPR029052">
    <property type="entry name" value="Metallo-depent_PP-like"/>
</dbReference>
<dbReference type="PANTHER" id="PTHR12849:SF0">
    <property type="entry name" value="LARIAT DEBRANCHING ENZYME"/>
    <property type="match status" value="1"/>
</dbReference>
<dbReference type="PANTHER" id="PTHR12849">
    <property type="entry name" value="RNA LARIAT DEBRANCHING ENZYME"/>
    <property type="match status" value="1"/>
</dbReference>
<dbReference type="Pfam" id="PF20890">
    <property type="entry name" value="Dbr1_C"/>
    <property type="match status" value="1"/>
</dbReference>
<dbReference type="Pfam" id="PF00149">
    <property type="entry name" value="Metallophos"/>
    <property type="match status" value="1"/>
</dbReference>
<dbReference type="SUPFAM" id="SSF56300">
    <property type="entry name" value="Metallo-dependent phosphatases"/>
    <property type="match status" value="1"/>
</dbReference>
<sequence length="354" mass="41034">MATEQIQHIAIVGCVHGKYREMYRQLSEYEKSTGKEISFVICTGDMQTLRYEADLVYLKVPPKYKQMGDFHLYYEGKEKAPYLTLFIGGNHESSNVLLHLYNGGFVCFNMYYLGVCSCININGLRIVGVSGIYKSFDEKKPYTYPPSPNDVVSLFHTRNYVIQMLSNLSQSSQIDISLSHDWPQGIVMKGNYKQLYRFQPGFKKDGASLGSPINKVILNTLKPKYWISGHMHCEYHAEEGPTHFIALGKIGYKNAISYLDLPLKQKTDLEYDKDWVCNLIMTWPAFSNKAQFPDLSYSISELLSKRTKELDKKIIELWEKYIGLKIIYDSDTFDIQFTSRRFYIEKIYNELNIN</sequence>
<organism evidence="9">
    <name type="scientific">Entamoeba histolytica (strain ATCC 30459 / HM-1:IMSS / ABRM)</name>
    <dbReference type="NCBI Taxonomy" id="294381"/>
    <lineage>
        <taxon>Eukaryota</taxon>
        <taxon>Amoebozoa</taxon>
        <taxon>Evosea</taxon>
        <taxon>Archamoebae</taxon>
        <taxon>Mastigamoebida</taxon>
        <taxon>Entamoebidae</taxon>
        <taxon>Entamoeba</taxon>
    </lineage>
</organism>
<proteinExistence type="evidence at protein level"/>
<protein>
    <recommendedName>
        <fullName evidence="8">Lariat debranching enzyme</fullName>
        <ecNumber evidence="1 2 3">3.1.4.-</ecNumber>
    </recommendedName>
    <alternativeName>
        <fullName evidence="6">Intron debranching enzyme</fullName>
    </alternativeName>
    <alternativeName>
        <fullName evidence="7">RNA lariat debranching enzyme</fullName>
    </alternativeName>
</protein>
<gene>
    <name evidence="6" type="primary">DBR1</name>
    <name evidence="9" type="ORF">EHI_062730</name>
</gene>
<reference evidence="9" key="1">
    <citation type="journal article" date="2005" name="Nature">
        <title>The genome of the protist parasite Entamoeba histolytica.</title>
        <authorList>
            <person name="Loftus B.J."/>
            <person name="Anderson I."/>
            <person name="Davies R."/>
            <person name="Alsmark U.C."/>
            <person name="Samuelson J."/>
            <person name="Amedeo P."/>
            <person name="Roncaglia P."/>
            <person name="Berriman M."/>
            <person name="Hirt R.P."/>
            <person name="Mann B.J."/>
            <person name="Nozaki T."/>
            <person name="Suh B."/>
            <person name="Pop M."/>
            <person name="Duchene M."/>
            <person name="Ackers J."/>
            <person name="Tannich E."/>
            <person name="Leippe M."/>
            <person name="Hofer M."/>
            <person name="Bruchhaus I."/>
            <person name="Willhoeft U."/>
            <person name="Bhattacharya A."/>
            <person name="Chillingworth T."/>
            <person name="Churcher C.M."/>
            <person name="Hance Z."/>
            <person name="Harris B."/>
            <person name="Harris D."/>
            <person name="Jagels K."/>
            <person name="Moule S."/>
            <person name="Mungall K.L."/>
            <person name="Ormond D."/>
            <person name="Squares R."/>
            <person name="Whitehead S."/>
            <person name="Quail M.A."/>
            <person name="Rabbinowitsch E."/>
            <person name="Norbertczak H."/>
            <person name="Price C."/>
            <person name="Wang Z."/>
            <person name="Guillen N."/>
            <person name="Gilchrist C."/>
            <person name="Stroup S.E."/>
            <person name="Bhattacharya S."/>
            <person name="Lohia A."/>
            <person name="Foster P.G."/>
            <person name="Sicheritz-Ponten T."/>
            <person name="Weber C."/>
            <person name="Singh U."/>
            <person name="Mukherjee C."/>
            <person name="El-Sayed N.M.A."/>
            <person name="Petri W.A."/>
            <person name="Clark C.G."/>
            <person name="Embley T.M."/>
            <person name="Barrell B.G."/>
            <person name="Fraser C.M."/>
            <person name="Hall N."/>
        </authorList>
    </citation>
    <scope>NUCLEOTIDE SEQUENCE [LARGE SCALE GENOMIC DNA]</scope>
    <source>
        <strain evidence="9">ATCC 30459 / HM-1:IMSS / ABRM</strain>
    </source>
</reference>
<reference evidence="8" key="2">
    <citation type="journal article" date="2018" name="Front. Cell. Infect. Microbiol.">
        <title>Unexplored Molecular Features of the Entamoeba histolytica RNA Lariat Debranching Enzyme Dbr1 Expression Profile.</title>
        <authorList>
            <person name="Valdes J."/>
            <person name="Ortuno-Pineda C."/>
            <person name="Saucedo-Cardenas O."/>
            <person name="Mendoza-Figueroa M.S."/>
        </authorList>
    </citation>
    <scope>SUBCELLULAR LOCATION</scope>
    <scope>DEVELOPMENTAL STAGE</scope>
</reference>
<reference evidence="10 11 12 13" key="3">
    <citation type="journal article" date="2014" name="Nucleic Acids Res.">
        <title>Structural basis of lariat RNA recognition by the intron debranching enzyme Dbr1.</title>
        <authorList>
            <person name="Montemayor E.J."/>
            <person name="Katolik A."/>
            <person name="Clark N.E."/>
            <person name="Taylor A.B."/>
            <person name="Schuermann J.P."/>
            <person name="Combs D.J."/>
            <person name="Johnsson R."/>
            <person name="Holloway S.P."/>
            <person name="Stevens S.W."/>
            <person name="Damha M.J."/>
            <person name="Hart P.J."/>
        </authorList>
    </citation>
    <scope>X-RAY CRYSTALLOGRAPHY (1.95 ANGSTROMS) OF WILD TYPE AND MUTANT SER-14 IN COMPLEX WITH 5'-GMP; SYNTHETIC BRANCHED RNA; MANGANESE AND NICKEL</scope>
    <scope>FUNCTION</scope>
    <scope>CATALYTIC ACTIVITY</scope>
    <scope>COFACTOR</scope>
    <scope>ACTIVITY REGULATION</scope>
    <scope>MUTAGENESIS OF CYS-14; 130-SER--ARG-158; 141-PRO--PRO-146 AND 273-LYS--ASN-354</scope>
</reference>
<reference evidence="14 15 16 17" key="4">
    <citation type="journal article" date="2016" name="Proc. Natl. Acad. Sci. U.S.A.">
        <title>Metal dependence and branched RNA cocrystal structures of the RNA lariat debranching enzyme Dbr1.</title>
        <authorList>
            <person name="Clark N.E."/>
            <person name="Katolik A."/>
            <person name="Roberts K."/>
            <person name="Taylor A.B."/>
            <person name="Holloway S.P."/>
            <person name="Schuermann J.P."/>
            <person name="Montemayor E.J."/>
            <person name="Stevens S.W."/>
            <person name="Fitzpatrick P.F."/>
            <person name="Damha M.J."/>
            <person name="Hart P.J."/>
        </authorList>
    </citation>
    <scope>X-RAY CRYSTALLOGRAPHY (2.08 ANGSTROMS) OF APO FORM; WILD TYPE AND MUTANT ALA-91 IN COMPLEX WITH IRON; ZINC AND SYNTHETIC BRANCHED RNA</scope>
    <scope>FUNCTION</scope>
    <scope>CATALYTIC ACTIVITY</scope>
    <scope>COFACTOR</scope>
    <scope>ACTIVITY REGULATION</scope>
    <scope>BIOPHYSICOCHEMICAL PROPERTIES</scope>
</reference>
<reference evidence="18" key="5">
    <citation type="journal article" date="2017" name="FEBS Lett.">
        <title>Crystal structure of the Entamoeba histolytica RNA lariat debranching enzyme EhDbr1 reveals a catalytic Zn&lt;sup&gt;2+&lt;/sup&gt; /Mn&lt;sup&gt;2+&lt;/sup&gt; heterobinucleation.</title>
        <authorList>
            <person name="Ransey E."/>
            <person name="Paredes E."/>
            <person name="Dey S.K."/>
            <person name="Das S.R."/>
            <person name="Heroux A."/>
            <person name="Macbeth M.R."/>
        </authorList>
    </citation>
    <scope>X-RAY CRYSTALLOGRAPHY (1.80 ANGSTROMS) OF 7-354 IN COMPLEX WITH ZINC AND MANGANESE</scope>
    <scope>FUNCTION</scope>
    <scope>CATALYTIC ACTIVITY</scope>
    <scope>COFACTOR</scope>
    <scope>ACTIVITY REGULATION</scope>
</reference>
<reference evidence="19" key="6">
    <citation type="submission" date="2022-08" db="PDB data bank">
        <title>Dbr1 in complex with 5-mer cleavage product.</title>
        <authorList>
            <person name="Clark N.E."/>
            <person name="Taylor A.B."/>
        </authorList>
    </citation>
    <scope>X-RAY CRYSTALLOGRAPHY (2.10 ANGSTROMS) IN COMPLEX WITH SYNTHETIC RNA</scope>
</reference>
<feature type="chain" id="PRO_0000457482" description="Lariat debranching enzyme">
    <location>
        <begin position="1"/>
        <end position="354"/>
    </location>
</feature>
<feature type="region of interest" description="Lariat recognition loop" evidence="2">
    <location>
        <begin position="130"/>
        <end position="158"/>
    </location>
</feature>
<feature type="binding site" evidence="2 3 15 16 17 18">
    <location>
        <position position="14"/>
    </location>
    <ligand>
        <name>a divalent metal cation</name>
        <dbReference type="ChEBI" id="CHEBI:60240"/>
        <label>1</label>
    </ligand>
</feature>
<feature type="binding site" evidence="2 3 15 16 17 18">
    <location>
        <position position="16"/>
    </location>
    <ligand>
        <name>a divalent metal cation</name>
        <dbReference type="ChEBI" id="CHEBI:60240"/>
        <label>1</label>
    </ligand>
</feature>
<feature type="binding site" evidence="1 2 3 10 11 12 13 15 16 17 18">
    <location>
        <position position="45"/>
    </location>
    <ligand>
        <name>a divalent metal cation</name>
        <dbReference type="ChEBI" id="CHEBI:60240"/>
        <label>2</label>
    </ligand>
</feature>
<feature type="binding site" evidence="1 5 12 19">
    <location>
        <position position="59"/>
    </location>
    <ligand>
        <name>RNA</name>
        <dbReference type="ChEBI" id="CHEBI:33697"/>
    </ligand>
</feature>
<feature type="binding site" evidence="2 3 10 11 12 13 15 16 17 18">
    <location>
        <position position="90"/>
    </location>
    <ligand>
        <name>a divalent metal cation</name>
        <dbReference type="ChEBI" id="CHEBI:60240"/>
        <label>2</label>
    </ligand>
</feature>
<feature type="binding site" evidence="1 5 11 13 19">
    <location>
        <position position="90"/>
    </location>
    <ligand>
        <name>RNA</name>
        <dbReference type="ChEBI" id="CHEBI:33697"/>
    </ligand>
</feature>
<feature type="binding site" evidence="1 11 13">
    <location>
        <position position="91"/>
    </location>
    <ligand>
        <name>RNA</name>
        <dbReference type="ChEBI" id="CHEBI:33697"/>
    </ligand>
</feature>
<feature type="binding site" evidence="1 5 12 19">
    <location>
        <position position="134"/>
    </location>
    <ligand>
        <name>RNA</name>
        <dbReference type="ChEBI" id="CHEBI:33697"/>
    </ligand>
</feature>
<feature type="binding site" evidence="1 5 12 19">
    <location>
        <position position="156"/>
    </location>
    <ligand>
        <name>RNA</name>
        <dbReference type="ChEBI" id="CHEBI:33697"/>
    </ligand>
</feature>
<feature type="binding site" evidence="1 2 3 10 11 12 13 15 16 17 18">
    <location>
        <position position="180"/>
    </location>
    <ligand>
        <name>a divalent metal cation</name>
        <dbReference type="ChEBI" id="CHEBI:60240"/>
        <label>2</label>
    </ligand>
</feature>
<feature type="binding site" evidence="1 2 11 13 16 17">
    <location>
        <position position="201"/>
    </location>
    <ligand>
        <name>RNA</name>
        <dbReference type="ChEBI" id="CHEBI:33697"/>
    </ligand>
</feature>
<feature type="binding site" evidence="1 2 11 12 13 16 17">
    <location>
        <position position="205"/>
    </location>
    <ligand>
        <name>RNA</name>
        <dbReference type="ChEBI" id="CHEBI:33697"/>
    </ligand>
</feature>
<feature type="binding site" evidence="2 3 10 11 12 13 15 16 17 18">
    <location>
        <position position="230"/>
    </location>
    <ligand>
        <name>a divalent metal cation</name>
        <dbReference type="ChEBI" id="CHEBI:60240"/>
        <label>2</label>
    </ligand>
</feature>
<feature type="binding site" evidence="2 11 13">
    <location>
        <position position="230"/>
    </location>
    <ligand>
        <name>RNA</name>
        <dbReference type="ChEBI" id="CHEBI:33697"/>
    </ligand>
</feature>
<feature type="binding site" evidence="2 11 13">
    <location>
        <position position="231"/>
    </location>
    <ligand>
        <name>RNA</name>
        <dbReference type="ChEBI" id="CHEBI:33697"/>
    </ligand>
</feature>
<feature type="binding site" evidence="2 3 15 16 17 18">
    <location>
        <position position="232"/>
    </location>
    <ligand>
        <name>a divalent metal cation</name>
        <dbReference type="ChEBI" id="CHEBI:60240"/>
        <label>1</label>
    </ligand>
</feature>
<feature type="binding site" evidence="1 2 11 13 16 17">
    <location>
        <position position="232"/>
    </location>
    <ligand>
        <name>RNA</name>
        <dbReference type="ChEBI" id="CHEBI:33697"/>
    </ligand>
</feature>
<feature type="mutagenesis site" description="Fails to complement a DBR1-deficient yeast mutant resulting in the accumulation of lariat intron." evidence="1">
    <original>C</original>
    <variation>A</variation>
    <location>
        <position position="14"/>
    </location>
</feature>
<feature type="mutagenesis site" description="Loss of RNA debranching activity. Fails to complement a DBR1-deficient yeast mutant resulting in the accumulation of lariat intron." evidence="1">
    <original>C</original>
    <variation>S</variation>
    <location>
        <position position="14"/>
    </location>
</feature>
<feature type="mutagenesis site" description="Fails to complement a DBR1-deficient yeast mutant resulting in the accumulation of lariat intron." evidence="1">
    <location>
        <begin position="130"/>
        <end position="158"/>
    </location>
</feature>
<feature type="mutagenesis site" description="Fails to complement a DBR1-deficient yeast mutant resulting in the accumulation of lariat intron." evidence="1">
    <original>PYTYPP</original>
    <variation>AAAAAA</variation>
    <location>
        <begin position="141"/>
        <end position="146"/>
    </location>
</feature>
<feature type="mutagenesis site" description="Fails to complement a DBR1-deficient yeast mutant resulting in the accumulation of lariat intron." evidence="1">
    <location>
        <begin position="273"/>
        <end position="354"/>
    </location>
</feature>
<feature type="strand" evidence="21">
    <location>
        <begin position="7"/>
        <end position="14"/>
    </location>
</feature>
<feature type="helix" evidence="21">
    <location>
        <begin position="19"/>
        <end position="33"/>
    </location>
</feature>
<feature type="strand" evidence="21">
    <location>
        <begin position="37"/>
        <end position="44"/>
    </location>
</feature>
<feature type="helix" evidence="21">
    <location>
        <begin position="52"/>
        <end position="57"/>
    </location>
</feature>
<feature type="helix" evidence="21">
    <location>
        <begin position="62"/>
        <end position="64"/>
    </location>
</feature>
<feature type="helix" evidence="21">
    <location>
        <begin position="70"/>
        <end position="74"/>
    </location>
</feature>
<feature type="strand" evidence="21">
    <location>
        <begin position="84"/>
        <end position="86"/>
    </location>
</feature>
<feature type="strand" evidence="21">
    <location>
        <begin position="90"/>
        <end position="92"/>
    </location>
</feature>
<feature type="helix" evidence="21">
    <location>
        <begin position="94"/>
        <end position="99"/>
    </location>
</feature>
<feature type="turn" evidence="21">
    <location>
        <begin position="100"/>
        <end position="102"/>
    </location>
</feature>
<feature type="strand" evidence="21">
    <location>
        <begin position="104"/>
        <end position="107"/>
    </location>
</feature>
<feature type="strand" evidence="21">
    <location>
        <begin position="110"/>
        <end position="112"/>
    </location>
</feature>
<feature type="strand" evidence="21">
    <location>
        <begin position="115"/>
        <end position="121"/>
    </location>
</feature>
<feature type="strand" evidence="21">
    <location>
        <begin position="124"/>
        <end position="129"/>
    </location>
</feature>
<feature type="helix" evidence="21">
    <location>
        <begin position="135"/>
        <end position="137"/>
    </location>
</feature>
<feature type="strand" evidence="21">
    <location>
        <begin position="142"/>
        <end position="145"/>
    </location>
</feature>
<feature type="helix" evidence="21">
    <location>
        <begin position="148"/>
        <end position="152"/>
    </location>
</feature>
<feature type="turn" evidence="21">
    <location>
        <begin position="153"/>
        <end position="155"/>
    </location>
</feature>
<feature type="helix" evidence="21">
    <location>
        <begin position="160"/>
        <end position="165"/>
    </location>
</feature>
<feature type="turn" evidence="21">
    <location>
        <begin position="166"/>
        <end position="169"/>
    </location>
</feature>
<feature type="strand" evidence="21">
    <location>
        <begin position="170"/>
        <end position="172"/>
    </location>
</feature>
<feature type="strand" evidence="21">
    <location>
        <begin position="175"/>
        <end position="181"/>
    </location>
</feature>
<feature type="helix" evidence="21">
    <location>
        <begin position="186"/>
        <end position="189"/>
    </location>
</feature>
<feature type="helix" evidence="21">
    <location>
        <begin position="192"/>
        <end position="198"/>
    </location>
</feature>
<feature type="helix" evidence="21">
    <location>
        <begin position="200"/>
        <end position="208"/>
    </location>
</feature>
<feature type="helix" evidence="21">
    <location>
        <begin position="212"/>
        <end position="221"/>
    </location>
</feature>
<feature type="strand" evidence="21">
    <location>
        <begin position="224"/>
        <end position="228"/>
    </location>
</feature>
<feature type="strand" evidence="21">
    <location>
        <begin position="230"/>
        <end position="233"/>
    </location>
</feature>
<feature type="strand" evidence="21">
    <location>
        <begin position="235"/>
        <end position="239"/>
    </location>
</feature>
<feature type="strand" evidence="21">
    <location>
        <begin position="242"/>
        <end position="246"/>
    </location>
</feature>
<feature type="helix" evidence="20">
    <location>
        <begin position="253"/>
        <end position="255"/>
    </location>
</feature>
<feature type="strand" evidence="21">
    <location>
        <begin position="256"/>
        <end position="261"/>
    </location>
</feature>
<feature type="helix" evidence="21">
    <location>
        <begin position="273"/>
        <end position="281"/>
    </location>
</feature>
<feature type="helix" evidence="21">
    <location>
        <begin position="283"/>
        <end position="286"/>
    </location>
</feature>
<feature type="helix" evidence="21">
    <location>
        <begin position="299"/>
        <end position="304"/>
    </location>
</feature>
<feature type="helix" evidence="21">
    <location>
        <begin position="308"/>
        <end position="321"/>
    </location>
</feature>
<feature type="helix" evidence="21">
    <location>
        <begin position="333"/>
        <end position="350"/>
    </location>
</feature>
<keyword id="KW-0002">3D-structure</keyword>
<keyword id="KW-0963">Cytoplasm</keyword>
<keyword id="KW-0378">Hydrolase</keyword>
<keyword id="KW-0408">Iron</keyword>
<keyword id="KW-0464">Manganese</keyword>
<keyword id="KW-0479">Metal-binding</keyword>
<keyword id="KW-0507">mRNA processing</keyword>
<keyword id="KW-1185">Reference proteome</keyword>
<keyword id="KW-0694">RNA-binding</keyword>
<keyword id="KW-0862">Zinc</keyword>